<feature type="chain" id="PRO_0000089496" description="Centrosomal protein of 68 kDa">
    <location>
        <begin position="1"/>
        <end position="751"/>
    </location>
</feature>
<feature type="region of interest" description="Disordered" evidence="4">
    <location>
        <begin position="1"/>
        <end position="253"/>
    </location>
</feature>
<feature type="region of interest" description="Disordered" evidence="4">
    <location>
        <begin position="339"/>
        <end position="474"/>
    </location>
</feature>
<feature type="region of interest" description="Disordered" evidence="4">
    <location>
        <begin position="511"/>
        <end position="545"/>
    </location>
</feature>
<feature type="region of interest" description="Disordered" evidence="4">
    <location>
        <begin position="590"/>
        <end position="611"/>
    </location>
</feature>
<feature type="compositionally biased region" description="Basic and acidic residues" evidence="4">
    <location>
        <begin position="1"/>
        <end position="17"/>
    </location>
</feature>
<feature type="compositionally biased region" description="Basic and acidic residues" evidence="4">
    <location>
        <begin position="86"/>
        <end position="96"/>
    </location>
</feature>
<feature type="compositionally biased region" description="Polar residues" evidence="4">
    <location>
        <begin position="131"/>
        <end position="144"/>
    </location>
</feature>
<feature type="compositionally biased region" description="Polar residues" evidence="4">
    <location>
        <begin position="163"/>
        <end position="175"/>
    </location>
</feature>
<feature type="compositionally biased region" description="Low complexity" evidence="4">
    <location>
        <begin position="176"/>
        <end position="200"/>
    </location>
</feature>
<feature type="compositionally biased region" description="Polar residues" evidence="4">
    <location>
        <begin position="339"/>
        <end position="348"/>
    </location>
</feature>
<feature type="compositionally biased region" description="Basic and acidic residues" evidence="4">
    <location>
        <begin position="399"/>
        <end position="416"/>
    </location>
</feature>
<feature type="compositionally biased region" description="Basic and acidic residues" evidence="4">
    <location>
        <begin position="433"/>
        <end position="450"/>
    </location>
</feature>
<feature type="compositionally biased region" description="Polar residues" evidence="4">
    <location>
        <begin position="451"/>
        <end position="461"/>
    </location>
</feature>
<feature type="compositionally biased region" description="Low complexity" evidence="4">
    <location>
        <begin position="520"/>
        <end position="537"/>
    </location>
</feature>
<feature type="modified residue" description="Phosphoserine" evidence="2">
    <location>
        <position position="326"/>
    </location>
</feature>
<feature type="modified residue" description="Phosphoserine" evidence="3">
    <location>
        <position position="466"/>
    </location>
</feature>
<feature type="modified residue" description="Phosphoserine" evidence="2">
    <location>
        <position position="472"/>
    </location>
</feature>
<keyword id="KW-0963">Cytoplasm</keyword>
<keyword id="KW-0206">Cytoskeleton</keyword>
<keyword id="KW-0597">Phosphoprotein</keyword>
<keyword id="KW-1185">Reference proteome</keyword>
<keyword id="KW-0832">Ubl conjugation</keyword>
<comment type="function">
    <text evidence="2">Involved in maintenance of centrosome cohesion, probably as part of a linker structure which prevents centrosome splitting. Required for localization of CDK5RAP2 to the centrosome during interphase. Contributes to CROCC/rootletin filament formation.</text>
</comment>
<comment type="subunit">
    <text evidence="2">Interacts with CNTLN; the interaction recruits CEP68 to the centrosome. Interacts with the SCF(FBXW11) complex which contains SKP1, CUL1 and FBXW11; the interaction is probably mediated by FBXW11 and the complex also contains CDK5RAP2 and PCNT. Also interacts with F-box protein BTRC. Interacts with serine/threonine-protein kinase PLK1; the interaction leads to phosphorylation of CEP68 and its subsequent degradation. Interacts with NEK2; the interaction leads to phosphorylation of CEP68.</text>
</comment>
<comment type="subcellular location">
    <subcellularLocation>
        <location evidence="1">Cytoplasm</location>
        <location evidence="1">Cytoskeleton</location>
        <location evidence="1">Microtubule organizing center</location>
        <location evidence="1">Centrosome</location>
    </subcellularLocation>
    <text evidence="2">Localizes to thin fibers protruding away from the proximal ends of the two centrioles. Dissociates from interphase centrosomes at the onset of mitosis.</text>
</comment>
<comment type="PTM">
    <text evidence="2">Phosphorylation by PLK1 is required for binding to BTRC in prometaphase. Phosphorylated directly or indirectly by NEK2. NEK2-mediated phosphorylation promotes CEP68 dissociation from the centrosome and its degradation at the onset of mitosis.</text>
</comment>
<comment type="PTM">
    <text evidence="2">Ubiquitinated and targeted for proteasomal degradation in early mitosis by the SCF(BTRC) and/or SCF(FBXW11) E3 ubiquitin-protein ligase complexes. Degradation is complete by prometaphase and is required for removal of CDK5RAP2 from the peripheral pericentriolar material and subsequent centriole separation.</text>
</comment>
<dbReference type="EMBL" id="CR858217">
    <property type="protein sequence ID" value="CAH90455.1"/>
    <property type="molecule type" value="mRNA"/>
</dbReference>
<dbReference type="RefSeq" id="NP_001125234.1">
    <property type="nucleotide sequence ID" value="NM_001131762.1"/>
</dbReference>
<dbReference type="SMR" id="Q5RCQ2"/>
<dbReference type="FunCoup" id="Q5RCQ2">
    <property type="interactions" value="1551"/>
</dbReference>
<dbReference type="STRING" id="9601.ENSPPYP00000013784"/>
<dbReference type="GeneID" id="100172127"/>
<dbReference type="KEGG" id="pon:100172127"/>
<dbReference type="CTD" id="23177"/>
<dbReference type="eggNOG" id="ENOG502RK93">
    <property type="taxonomic scope" value="Eukaryota"/>
</dbReference>
<dbReference type="InParanoid" id="Q5RCQ2"/>
<dbReference type="OrthoDB" id="9448174at2759"/>
<dbReference type="Proteomes" id="UP000001595">
    <property type="component" value="Unplaced"/>
</dbReference>
<dbReference type="GO" id="GO:0005813">
    <property type="term" value="C:centrosome"/>
    <property type="evidence" value="ECO:0000250"/>
    <property type="project" value="UniProtKB"/>
</dbReference>
<dbReference type="GO" id="GO:0005737">
    <property type="term" value="C:cytoplasm"/>
    <property type="evidence" value="ECO:0007669"/>
    <property type="project" value="UniProtKB-KW"/>
</dbReference>
<dbReference type="GO" id="GO:0007098">
    <property type="term" value="P:centrosome cycle"/>
    <property type="evidence" value="ECO:0000250"/>
    <property type="project" value="UniProtKB"/>
</dbReference>
<dbReference type="FunFam" id="1.20.58.60:FF:000296">
    <property type="entry name" value="centrosomal protein of 68 kDa"/>
    <property type="match status" value="1"/>
</dbReference>
<dbReference type="Gene3D" id="1.20.58.60">
    <property type="match status" value="1"/>
</dbReference>
<dbReference type="SUPFAM" id="SSF46966">
    <property type="entry name" value="Spectrin repeat"/>
    <property type="match status" value="1"/>
</dbReference>
<protein>
    <recommendedName>
        <fullName>Centrosomal protein of 68 kDa</fullName>
        <shortName>Cep68</shortName>
    </recommendedName>
</protein>
<sequence>MALGEEKAEAEASEDTKAQSYGRGSCGERELDTPGPMSGEQPPRLEAEGGLTSPVWGAEGIPAPTCWIGTDPGGPSRAHQPQASDASREPVAERSEPALSGLPPATMGSGDLLLSRESQVEKTKLSASEELPQTPSLPRTTTICSGHDADTEDDPSLADLPQAPSSGLSCLSQWKSMPSPGSAAPQPSSCSVSASSTGSSLQGHQERTEPRGGSLAKVSSSLELVVPQEPSSVVGLGPRPQWSPQPVFSGGDASGLGRRRLSFQAEYWACVLPDSLPPSPDRHSPLWNPNKEYEDLLDYTYPLRPGPQLPKHLDSRVPADPVLQDSGVDLDSFSVSPASTLKSPTNVFPNCPPAEATALPLSGPREPSLKQWPSGVPQKQGGMGLASWSQLTSTPRAPGSRDARWECREPALRGAKDWLPIGKPLDMGSPQLRTRDRGWPSPRPEREKRTSQSARRPTCTESRWKSEEEVESDDEYLALPARLTQVSSLVSYIGSISTLVTLPAGDIKGQSPLEVSDTDGPASLPSSSSQSQLPPGAALRGSGDPEGQNPCFLRSFVRAQDSAGEGSLGSSQALGVSSGLLKTRPSLPARLDRWPFSDPDAEGQLPRKGGEQGKESLVQCVKTFCCQLEELICWLYNVADVTDHGTAARSNLTSLKSSLQLYRQFKKDIDEHQSLTESVLQKGEILLQCLLENTPVLEDVLGRIAKQSGELESHADRLYDSILASLDMLAGCTLIPDKKPMAAMERPREGV</sequence>
<name>CEP68_PONAB</name>
<gene>
    <name type="primary">CEP68</name>
</gene>
<proteinExistence type="evidence at transcript level"/>
<reference key="1">
    <citation type="submission" date="2004-11" db="EMBL/GenBank/DDBJ databases">
        <authorList>
            <consortium name="The German cDNA consortium"/>
        </authorList>
    </citation>
    <scope>NUCLEOTIDE SEQUENCE [LARGE SCALE MRNA]</scope>
    <source>
        <tissue>Kidney</tissue>
    </source>
</reference>
<accession>Q5RCQ2</accession>
<evidence type="ECO:0000250" key="1"/>
<evidence type="ECO:0000250" key="2">
    <source>
        <dbReference type="UniProtKB" id="Q76N32"/>
    </source>
</evidence>
<evidence type="ECO:0000250" key="3">
    <source>
        <dbReference type="UniProtKB" id="Q8C0D9"/>
    </source>
</evidence>
<evidence type="ECO:0000256" key="4">
    <source>
        <dbReference type="SAM" id="MobiDB-lite"/>
    </source>
</evidence>
<organism>
    <name type="scientific">Pongo abelii</name>
    <name type="common">Sumatran orangutan</name>
    <name type="synonym">Pongo pygmaeus abelii</name>
    <dbReference type="NCBI Taxonomy" id="9601"/>
    <lineage>
        <taxon>Eukaryota</taxon>
        <taxon>Metazoa</taxon>
        <taxon>Chordata</taxon>
        <taxon>Craniata</taxon>
        <taxon>Vertebrata</taxon>
        <taxon>Euteleostomi</taxon>
        <taxon>Mammalia</taxon>
        <taxon>Eutheria</taxon>
        <taxon>Euarchontoglires</taxon>
        <taxon>Primates</taxon>
        <taxon>Haplorrhini</taxon>
        <taxon>Catarrhini</taxon>
        <taxon>Hominidae</taxon>
        <taxon>Pongo</taxon>
    </lineage>
</organism>